<dbReference type="EMBL" id="DQ899947">
    <property type="protein sequence ID" value="ABI32492.1"/>
    <property type="molecule type" value="Genomic_DNA"/>
</dbReference>
<dbReference type="RefSeq" id="YP_740185.1">
    <property type="nucleotide sequence ID" value="NC_008326.1"/>
</dbReference>
<dbReference type="SMR" id="Q0G9N6"/>
<dbReference type="GeneID" id="4266585"/>
<dbReference type="GO" id="GO:0009535">
    <property type="term" value="C:chloroplast thylakoid membrane"/>
    <property type="evidence" value="ECO:0007669"/>
    <property type="project" value="UniProtKB-SubCell"/>
</dbReference>
<dbReference type="GO" id="GO:0009539">
    <property type="term" value="C:photosystem II reaction center"/>
    <property type="evidence" value="ECO:0007669"/>
    <property type="project" value="InterPro"/>
</dbReference>
<dbReference type="GO" id="GO:0015979">
    <property type="term" value="P:photosynthesis"/>
    <property type="evidence" value="ECO:0007669"/>
    <property type="project" value="UniProtKB-UniRule"/>
</dbReference>
<dbReference type="HAMAP" id="MF_00441">
    <property type="entry name" value="PSII_PsbK"/>
    <property type="match status" value="1"/>
</dbReference>
<dbReference type="InterPro" id="IPR003687">
    <property type="entry name" value="PSII_PsbK"/>
</dbReference>
<dbReference type="InterPro" id="IPR037270">
    <property type="entry name" value="PSII_PsbK_sf"/>
</dbReference>
<dbReference type="NCBIfam" id="NF002715">
    <property type="entry name" value="PRK02553.1"/>
    <property type="match status" value="1"/>
</dbReference>
<dbReference type="PANTHER" id="PTHR35325">
    <property type="match status" value="1"/>
</dbReference>
<dbReference type="PANTHER" id="PTHR35325:SF1">
    <property type="entry name" value="PHOTOSYSTEM II REACTION CENTER PROTEIN K"/>
    <property type="match status" value="1"/>
</dbReference>
<dbReference type="Pfam" id="PF02533">
    <property type="entry name" value="PsbK"/>
    <property type="match status" value="1"/>
</dbReference>
<dbReference type="SUPFAM" id="SSF161037">
    <property type="entry name" value="Photosystem II reaction center protein K, PsbK"/>
    <property type="match status" value="1"/>
</dbReference>
<feature type="propeptide" id="PRO_0000276152" evidence="1">
    <location>
        <begin position="1"/>
        <end position="24"/>
    </location>
</feature>
<feature type="chain" id="PRO_0000276153" description="Photosystem II reaction center protein K" evidence="1">
    <location>
        <begin position="25"/>
        <end position="61"/>
    </location>
</feature>
<feature type="transmembrane region" description="Helical" evidence="1">
    <location>
        <begin position="40"/>
        <end position="60"/>
    </location>
</feature>
<accession>Q0G9N6</accession>
<comment type="function">
    <text evidence="1">One of the components of the core complex of photosystem II (PSII). PSII is a light-driven water:plastoquinone oxidoreductase that uses light energy to abstract electrons from H(2)O, generating O(2) and a proton gradient subsequently used for ATP formation. It consists of a core antenna complex that captures photons, and an electron transfer chain that converts photonic excitation into a charge separation.</text>
</comment>
<comment type="subunit">
    <text evidence="1">PSII is composed of 1 copy each of membrane proteins PsbA, PsbB, PsbC, PsbD, PsbE, PsbF, PsbH, PsbI, PsbJ, PsbK, PsbL, PsbM, PsbT, PsbX, PsbY, PsbZ, Psb30/Ycf12, at least 3 peripheral proteins of the oxygen-evolving complex and a large number of cofactors. It forms dimeric complexes.</text>
</comment>
<comment type="subcellular location">
    <subcellularLocation>
        <location evidence="1">Plastid</location>
        <location evidence="1">Chloroplast thylakoid membrane</location>
        <topology evidence="1">Single-pass membrane protein</topology>
    </subcellularLocation>
</comment>
<comment type="similarity">
    <text evidence="1">Belongs to the PsbK family.</text>
</comment>
<gene>
    <name evidence="1" type="primary">psbK</name>
</gene>
<organism>
    <name type="scientific">Liriodendron tulipifera</name>
    <name type="common">Tuliptree</name>
    <name type="synonym">Tulip poplar</name>
    <dbReference type="NCBI Taxonomy" id="3415"/>
    <lineage>
        <taxon>Eukaryota</taxon>
        <taxon>Viridiplantae</taxon>
        <taxon>Streptophyta</taxon>
        <taxon>Embryophyta</taxon>
        <taxon>Tracheophyta</taxon>
        <taxon>Spermatophyta</taxon>
        <taxon>Magnoliopsida</taxon>
        <taxon>Magnoliidae</taxon>
        <taxon>Magnoliales</taxon>
        <taxon>Magnoliaceae</taxon>
        <taxon>Liriodendron</taxon>
    </lineage>
</organism>
<keyword id="KW-0150">Chloroplast</keyword>
<keyword id="KW-0472">Membrane</keyword>
<keyword id="KW-0602">Photosynthesis</keyword>
<keyword id="KW-0604">Photosystem II</keyword>
<keyword id="KW-0934">Plastid</keyword>
<keyword id="KW-0674">Reaction center</keyword>
<keyword id="KW-0793">Thylakoid</keyword>
<keyword id="KW-0812">Transmembrane</keyword>
<keyword id="KW-1133">Transmembrane helix</keyword>
<evidence type="ECO:0000255" key="1">
    <source>
        <dbReference type="HAMAP-Rule" id="MF_00441"/>
    </source>
</evidence>
<geneLocation type="chloroplast"/>
<proteinExistence type="inferred from homology"/>
<name>PSBK_LIRTU</name>
<protein>
    <recommendedName>
        <fullName evidence="1">Photosystem II reaction center protein K</fullName>
        <shortName evidence="1">PSII-K</shortName>
    </recommendedName>
</protein>
<sequence length="61" mass="6884">MLNIFSLICICINSALHSSSFFFAKLPEAYAFFNPIVDVMPVIPVLFFLLALVWQAAVSFR</sequence>
<reference key="1">
    <citation type="journal article" date="2006" name="BMC Evol. Biol.">
        <title>Complete plastid genome sequences of Drimys, Liriodendron, and Piper: implications for the phylogenetic relationships of magnoliids.</title>
        <authorList>
            <person name="Cai Z."/>
            <person name="Penaflor C."/>
            <person name="Kuehl J.V."/>
            <person name="Leebens-Mack J."/>
            <person name="Carlson J.E."/>
            <person name="dePamphilis C.W."/>
            <person name="Boore J.L."/>
            <person name="Jansen R.K."/>
        </authorList>
    </citation>
    <scope>NUCLEOTIDE SEQUENCE [LARGE SCALE GENOMIC DNA]</scope>
</reference>